<accession>Q9NAD6</accession>
<accession>A5HWB4</accession>
<accession>Q29TW4</accession>
<organism>
    <name type="scientific">Caenorhabditis elegans</name>
    <dbReference type="NCBI Taxonomy" id="6239"/>
    <lineage>
        <taxon>Eukaryota</taxon>
        <taxon>Metazoa</taxon>
        <taxon>Ecdysozoa</taxon>
        <taxon>Nematoda</taxon>
        <taxon>Chromadorea</taxon>
        <taxon>Rhabditida</taxon>
        <taxon>Rhabditina</taxon>
        <taxon>Rhabditomorpha</taxon>
        <taxon>Rhabditoidea</taxon>
        <taxon>Rhabditidae</taxon>
        <taxon>Peloderinae</taxon>
        <taxon>Caenorhabditis</taxon>
    </lineage>
</organism>
<proteinExistence type="evidence at protein level"/>
<sequence>MMGSSSQELQTALTDVSKTCHHLWEENKDLQGRFVNELGELQRLQMVIAQLEQQQRLENVFTVKQQMTELQKRAATLYEHLTQKRNDIVIKLNDGTNFATMLQTQLIGEKLFSWKNAQKLAQIGMPFDNREQLLDEIQIEFEFLADQNWQLNMFSCWMLDLLRRAPQLNDGLAQATIGKLTAITEQLNKLLFMLVSQSFIVSVQPEPVLKTQHKFVTEVRLLIGDKLGIRQHLVNTNVSVKIIAEDEAKQLSVDYDAHKEIRNNKTVGTISNDFEKLTMNERGHLAAKFNNSKLTRIAHRKPPPKGASDLKCAASMQAATDQKYALLFFITPFQMGNLSKEEQFDVWTLSLPIMVTVHGSQDCDAQVAILWHRAFASISRNPNTTDVTAVTWDNLAIMLRNKFSLFTGARRPLSDSDLAYLSEKMLMPNVADQKPITFHRFAKQAMRDDLPFSFWEWFFSIMQLIKQKLLKFWDEGWCIGFISKNDASQSMMMCQHSSFLLRFSDSQTGAVSIGFVCEEADGQKIPFHLAPFTIKDLDQLSLASRIASCPQLKDIRYMYPAIDKEEMLRFFESEERHRVGGGDSPTGYIQSEIVMVAKTNGNFRRMSNAPSMFGADSPSPLSVQSKLDWSPGEVHQNHMMEMSDELGQILTVSDMSGDVETLLGPAFKNNITNYNPHDGNHQHNLHFVDMSQQGMMQQHHNQFYPS</sequence>
<gene>
    <name evidence="4" type="primary">sta-1</name>
    <name type="ORF">Y51H4A.17</name>
</gene>
<comment type="function">
    <text evidence="3">Carries out a dual function: signal transduction and activation of transcription. Activated STAT proteins play a role in repression of dauer formation. Neuronal expression is held in check by negative signals through the TGF-beta pathway that target the daf-3 transcription factor.</text>
</comment>
<comment type="subunit">
    <text evidence="1">Forms a homodimer or a heterodimer with a related family member.</text>
</comment>
<comment type="interaction">
    <interactant intactId="EBI-312137">
        <id>Q9NAD6</id>
    </interactant>
    <interactant intactId="EBI-312011">
        <id>O44400</id>
        <label>F37C4.5</label>
    </interactant>
    <organismsDiffer>false</organismsDiffer>
    <experiments>2</experiments>
</comment>
<comment type="subcellular location">
    <subcellularLocation>
        <location evidence="3">Cytoplasm</location>
    </subcellularLocation>
    <subcellularLocation>
        <location evidence="3">Nucleus</location>
    </subcellularLocation>
    <text>Translocated into the nucleus in response to phosphorylation.</text>
</comment>
<comment type="alternative products">
    <event type="alternative splicing"/>
    <isoform>
        <id>Q9NAD6-1</id>
        <name>a</name>
        <sequence type="displayed"/>
    </isoform>
    <isoform>
        <id>Q9NAD6-2</id>
        <name>b</name>
        <sequence type="described" ref="VSP_038159 VSP_038160"/>
    </isoform>
    <isoform>
        <id>Q9NAD6-3</id>
        <name>c</name>
        <sequence type="described" ref="VSP_038161"/>
    </isoform>
</comment>
<comment type="tissue specificity">
    <text evidence="3">Expressed in adult and larval pharynx, head ganglia, tail ganglia, ventral nerve cord and body muscles.</text>
</comment>
<comment type="similarity">
    <text evidence="2">Belongs to the transcription factor STAT family.</text>
</comment>
<name>STAT1_CAEEL</name>
<feature type="chain" id="PRO_0000233906" description="Signal transducer and activator of transcription 1">
    <location>
        <begin position="1"/>
        <end position="706"/>
    </location>
</feature>
<feature type="domain" description="SH2" evidence="2">
    <location>
        <begin position="477"/>
        <end position="574"/>
    </location>
</feature>
<feature type="splice variant" id="VSP_038159" description="In isoform b." evidence="5">
    <original>YMYPAIDKEEM</original>
    <variation>LVLDAKSLPCC</variation>
    <location>
        <begin position="557"/>
        <end position="567"/>
    </location>
</feature>
<feature type="splice variant" id="VSP_038160" description="In isoform b." evidence="5">
    <location>
        <begin position="568"/>
        <end position="706"/>
    </location>
</feature>
<feature type="splice variant" id="VSP_038161" description="In isoform c." evidence="4">
    <location>
        <begin position="602"/>
        <end position="604"/>
    </location>
</feature>
<dbReference type="EMBL" id="AY943817">
    <property type="protein sequence ID" value="AAY18583.1"/>
    <property type="molecule type" value="mRNA"/>
</dbReference>
<dbReference type="EMBL" id="AL132952">
    <property type="protein sequence ID" value="CAB61149.2"/>
    <property type="molecule type" value="Genomic_DNA"/>
</dbReference>
<dbReference type="EMBL" id="AL132952">
    <property type="protein sequence ID" value="CAN86928.1"/>
    <property type="molecule type" value="Genomic_DNA"/>
</dbReference>
<dbReference type="EMBL" id="AL132952">
    <property type="protein sequence ID" value="CAN99759.1"/>
    <property type="molecule type" value="Genomic_DNA"/>
</dbReference>
<dbReference type="RefSeq" id="NP_001122814.1">
    <molecule id="Q9NAD6-2"/>
    <property type="nucleotide sequence ID" value="NM_001129342.4"/>
</dbReference>
<dbReference type="RefSeq" id="NP_001122815.1">
    <molecule id="Q9NAD6-3"/>
    <property type="nucleotide sequence ID" value="NM_001129343.3"/>
</dbReference>
<dbReference type="RefSeq" id="NP_502974.2">
    <molecule id="Q9NAD6-1"/>
    <property type="nucleotide sequence ID" value="NM_070573.6"/>
</dbReference>
<dbReference type="SMR" id="Q9NAD6"/>
<dbReference type="BioGRID" id="43543">
    <property type="interactions" value="21"/>
</dbReference>
<dbReference type="DIP" id="DIP-24746N"/>
<dbReference type="FunCoup" id="Q9NAD6">
    <property type="interactions" value="2166"/>
</dbReference>
<dbReference type="IntAct" id="Q9NAD6">
    <property type="interactions" value="8"/>
</dbReference>
<dbReference type="STRING" id="6239.Y51H4A.17a.1"/>
<dbReference type="iPTMnet" id="Q9NAD6"/>
<dbReference type="PaxDb" id="6239-Y51H4A.17a"/>
<dbReference type="PeptideAtlas" id="Q9NAD6"/>
<dbReference type="EnsemblMetazoa" id="Y51H4A.17a.1">
    <molecule id="Q9NAD6-1"/>
    <property type="protein sequence ID" value="Y51H4A.17a.1"/>
    <property type="gene ID" value="WBGene00013111"/>
</dbReference>
<dbReference type="EnsemblMetazoa" id="Y51H4A.17b.1">
    <molecule id="Q9NAD6-2"/>
    <property type="protein sequence ID" value="Y51H4A.17b.1"/>
    <property type="gene ID" value="WBGene00013111"/>
</dbReference>
<dbReference type="EnsemblMetazoa" id="Y51H4A.17c.1">
    <molecule id="Q9NAD6-3"/>
    <property type="protein sequence ID" value="Y51H4A.17c.1"/>
    <property type="gene ID" value="WBGene00013111"/>
</dbReference>
<dbReference type="GeneID" id="178465"/>
<dbReference type="KEGG" id="cel:CELE_Y51H4A.17"/>
<dbReference type="UCSC" id="Y51H4A.17a">
    <property type="organism name" value="c. elegans"/>
</dbReference>
<dbReference type="AGR" id="WB:WBGene00013111"/>
<dbReference type="CTD" id="178465"/>
<dbReference type="WormBase" id="Y51H4A.17a">
    <molecule id="Q9NAD6-1"/>
    <property type="protein sequence ID" value="CE35668"/>
    <property type="gene ID" value="WBGene00013111"/>
    <property type="gene designation" value="sta-1"/>
</dbReference>
<dbReference type="WormBase" id="Y51H4A.17b">
    <molecule id="Q9NAD6-2"/>
    <property type="protein sequence ID" value="CE41061"/>
    <property type="gene ID" value="WBGene00013111"/>
    <property type="gene designation" value="sta-1"/>
</dbReference>
<dbReference type="WormBase" id="Y51H4A.17c">
    <molecule id="Q9NAD6-3"/>
    <property type="protein sequence ID" value="CE22342"/>
    <property type="gene ID" value="WBGene00013111"/>
    <property type="gene designation" value="sta-1"/>
</dbReference>
<dbReference type="eggNOG" id="KOG3667">
    <property type="taxonomic scope" value="Eukaryota"/>
</dbReference>
<dbReference type="GeneTree" id="ENSGT01050000244905"/>
<dbReference type="InParanoid" id="Q9NAD6"/>
<dbReference type="OMA" id="YHAATTH"/>
<dbReference type="OrthoDB" id="19300at2759"/>
<dbReference type="PhylomeDB" id="Q9NAD6"/>
<dbReference type="Reactome" id="R-CEL-1059683">
    <property type="pathway name" value="Interleukin-6 signaling"/>
</dbReference>
<dbReference type="Reactome" id="R-CEL-1169408">
    <property type="pathway name" value="ISG15 antiviral mechanism"/>
</dbReference>
<dbReference type="Reactome" id="R-CEL-1251985">
    <property type="pathway name" value="Nuclear signaling by ERBB4"/>
</dbReference>
<dbReference type="Reactome" id="R-CEL-186763">
    <property type="pathway name" value="Downstream signal transduction"/>
</dbReference>
<dbReference type="Reactome" id="R-CEL-201556">
    <property type="pathway name" value="Signaling by ALK"/>
</dbReference>
<dbReference type="Reactome" id="R-CEL-3249367">
    <property type="pathway name" value="STAT6-mediated induction of chemokines"/>
</dbReference>
<dbReference type="Reactome" id="R-CEL-6783783">
    <property type="pathway name" value="Interleukin-10 signaling"/>
</dbReference>
<dbReference type="Reactome" id="R-CEL-6785807">
    <property type="pathway name" value="Interleukin-4 and Interleukin-13 signaling"/>
</dbReference>
<dbReference type="Reactome" id="R-CEL-877300">
    <property type="pathway name" value="Interferon gamma signaling"/>
</dbReference>
<dbReference type="Reactome" id="R-CEL-877312">
    <property type="pathway name" value="Regulation of IFNG signaling"/>
</dbReference>
<dbReference type="Reactome" id="R-CEL-8854691">
    <property type="pathway name" value="Interleukin-20 family signaling"/>
</dbReference>
<dbReference type="Reactome" id="R-CEL-8875791">
    <property type="pathway name" value="MET activates STAT3"/>
</dbReference>
<dbReference type="Reactome" id="R-CEL-8983432">
    <property type="pathway name" value="Interleukin-15 signaling"/>
</dbReference>
<dbReference type="Reactome" id="R-CEL-8984722">
    <property type="pathway name" value="Interleukin-35 Signalling"/>
</dbReference>
<dbReference type="Reactome" id="R-CEL-8985947">
    <property type="pathway name" value="Interleukin-9 signaling"/>
</dbReference>
<dbReference type="Reactome" id="R-CEL-9008059">
    <property type="pathway name" value="Interleukin-37 signaling"/>
</dbReference>
<dbReference type="Reactome" id="R-CEL-9020591">
    <property type="pathway name" value="Interleukin-12 signaling"/>
</dbReference>
<dbReference type="Reactome" id="R-CEL-9020933">
    <property type="pathway name" value="Interleukin-23 signaling"/>
</dbReference>
<dbReference type="Reactome" id="R-CEL-9020956">
    <property type="pathway name" value="Interleukin-27 signaling"/>
</dbReference>
<dbReference type="Reactome" id="R-CEL-909733">
    <property type="pathway name" value="Interferon alpha/beta signaling"/>
</dbReference>
<dbReference type="Reactome" id="R-CEL-9701898">
    <property type="pathway name" value="STAT3 nuclear events downstream of ALK signaling"/>
</dbReference>
<dbReference type="Reactome" id="R-CEL-9833482">
    <property type="pathway name" value="PKR-mediated signaling"/>
</dbReference>
<dbReference type="Reactome" id="R-CEL-9860927">
    <property type="pathway name" value="Turbulent (oscillatory, disturbed) flow shear stress activates signaling by PIEZO1 and integrins in endothelial cells"/>
</dbReference>
<dbReference type="SignaLink" id="Q9NAD6"/>
<dbReference type="PRO" id="PR:Q9NAD6"/>
<dbReference type="Proteomes" id="UP000001940">
    <property type="component" value="Chromosome IV"/>
</dbReference>
<dbReference type="Bgee" id="WBGene00013111">
    <property type="expression patterns" value="Expressed in pharyngeal muscle cell (C elegans) and 3 other cell types or tissues"/>
</dbReference>
<dbReference type="GO" id="GO:0005737">
    <property type="term" value="C:cytoplasm"/>
    <property type="evidence" value="ECO:0000314"/>
    <property type="project" value="WormBase"/>
</dbReference>
<dbReference type="GO" id="GO:0005634">
    <property type="term" value="C:nucleus"/>
    <property type="evidence" value="ECO:0000314"/>
    <property type="project" value="WormBase"/>
</dbReference>
<dbReference type="GO" id="GO:0000981">
    <property type="term" value="F:DNA-binding transcription factor activity, RNA polymerase II-specific"/>
    <property type="evidence" value="ECO:0000318"/>
    <property type="project" value="GO_Central"/>
</dbReference>
<dbReference type="GO" id="GO:0000978">
    <property type="term" value="F:RNA polymerase II cis-regulatory region sequence-specific DNA binding"/>
    <property type="evidence" value="ECO:0000318"/>
    <property type="project" value="GO_Central"/>
</dbReference>
<dbReference type="GO" id="GO:0043565">
    <property type="term" value="F:sequence-specific DNA binding"/>
    <property type="evidence" value="ECO:0000314"/>
    <property type="project" value="WormBase"/>
</dbReference>
<dbReference type="GO" id="GO:0007259">
    <property type="term" value="P:cell surface receptor signaling pathway via JAK-STAT"/>
    <property type="evidence" value="ECO:0000318"/>
    <property type="project" value="GO_Central"/>
</dbReference>
<dbReference type="GO" id="GO:0040024">
    <property type="term" value="P:dauer larval development"/>
    <property type="evidence" value="ECO:0000315"/>
    <property type="project" value="WormBase"/>
</dbReference>
<dbReference type="GO" id="GO:0006952">
    <property type="term" value="P:defense response"/>
    <property type="evidence" value="ECO:0000318"/>
    <property type="project" value="GO_Central"/>
</dbReference>
<dbReference type="GO" id="GO:0045944">
    <property type="term" value="P:positive regulation of transcription by RNA polymerase II"/>
    <property type="evidence" value="ECO:0000314"/>
    <property type="project" value="WormBase"/>
</dbReference>
<dbReference type="GO" id="GO:0042127">
    <property type="term" value="P:regulation of cell population proliferation"/>
    <property type="evidence" value="ECO:0000318"/>
    <property type="project" value="GO_Central"/>
</dbReference>
<dbReference type="GO" id="GO:0006357">
    <property type="term" value="P:regulation of transcription by RNA polymerase II"/>
    <property type="evidence" value="ECO:0000318"/>
    <property type="project" value="GO_Central"/>
</dbReference>
<dbReference type="CDD" id="cd09919">
    <property type="entry name" value="SH2_STAT_family"/>
    <property type="match status" value="1"/>
</dbReference>
<dbReference type="CDD" id="cd14786">
    <property type="entry name" value="STAT_CCD"/>
    <property type="match status" value="1"/>
</dbReference>
<dbReference type="CDD" id="cd14801">
    <property type="entry name" value="STAT_DBD"/>
    <property type="match status" value="1"/>
</dbReference>
<dbReference type="FunFam" id="1.10.238.10:FF:000493">
    <property type="entry name" value="Signal transducer and activator of transcription"/>
    <property type="match status" value="1"/>
</dbReference>
<dbReference type="FunFam" id="2.60.40.630:FF:000005">
    <property type="entry name" value="Signal transducer and activator of transcription"/>
    <property type="match status" value="1"/>
</dbReference>
<dbReference type="FunFam" id="1.20.1050.20:FF:000007">
    <property type="entry name" value="Signal transducer and activator of transcription 1"/>
    <property type="match status" value="1"/>
</dbReference>
<dbReference type="FunFam" id="3.30.505.10:FF:000127">
    <property type="entry name" value="Signal transducer and activator of transcription 1"/>
    <property type="match status" value="1"/>
</dbReference>
<dbReference type="Gene3D" id="1.10.238.10">
    <property type="entry name" value="EF-hand"/>
    <property type="match status" value="1"/>
</dbReference>
<dbReference type="Gene3D" id="3.30.505.10">
    <property type="entry name" value="SH2 domain"/>
    <property type="match status" value="1"/>
</dbReference>
<dbReference type="Gene3D" id="1.20.1050.20">
    <property type="entry name" value="STAT transcription factor, all-alpha domain"/>
    <property type="match status" value="1"/>
</dbReference>
<dbReference type="Gene3D" id="2.60.40.630">
    <property type="entry name" value="STAT transcription factor, DNA-binding domain"/>
    <property type="match status" value="1"/>
</dbReference>
<dbReference type="InterPro" id="IPR008967">
    <property type="entry name" value="p53-like_TF_DNA-bd_sf"/>
</dbReference>
<dbReference type="InterPro" id="IPR000980">
    <property type="entry name" value="SH2"/>
</dbReference>
<dbReference type="InterPro" id="IPR036860">
    <property type="entry name" value="SH2_dom_sf"/>
</dbReference>
<dbReference type="InterPro" id="IPR001217">
    <property type="entry name" value="STAT"/>
</dbReference>
<dbReference type="InterPro" id="IPR048988">
    <property type="entry name" value="STAT_linker"/>
</dbReference>
<dbReference type="InterPro" id="IPR013800">
    <property type="entry name" value="STAT_TF_alpha"/>
</dbReference>
<dbReference type="InterPro" id="IPR015988">
    <property type="entry name" value="STAT_TF_coiled-coil"/>
</dbReference>
<dbReference type="InterPro" id="IPR013801">
    <property type="entry name" value="STAT_TF_DNA-bd"/>
</dbReference>
<dbReference type="InterPro" id="IPR012345">
    <property type="entry name" value="STAT_TF_DNA-bd_N"/>
</dbReference>
<dbReference type="PANTHER" id="PTHR11801">
    <property type="entry name" value="SIGNAL TRANSDUCER AND ACTIVATOR OF TRANSCRIPTION"/>
    <property type="match status" value="1"/>
</dbReference>
<dbReference type="Pfam" id="PF00017">
    <property type="entry name" value="SH2"/>
    <property type="match status" value="1"/>
</dbReference>
<dbReference type="Pfam" id="PF01017">
    <property type="entry name" value="STAT_alpha"/>
    <property type="match status" value="1"/>
</dbReference>
<dbReference type="Pfam" id="PF02864">
    <property type="entry name" value="STAT_bind"/>
    <property type="match status" value="1"/>
</dbReference>
<dbReference type="Pfam" id="PF21354">
    <property type="entry name" value="STAT_linker"/>
    <property type="match status" value="1"/>
</dbReference>
<dbReference type="SUPFAM" id="SSF49417">
    <property type="entry name" value="p53-like transcription factors"/>
    <property type="match status" value="1"/>
</dbReference>
<dbReference type="SUPFAM" id="SSF55550">
    <property type="entry name" value="SH2 domain"/>
    <property type="match status" value="1"/>
</dbReference>
<dbReference type="SUPFAM" id="SSF47655">
    <property type="entry name" value="STAT"/>
    <property type="match status" value="1"/>
</dbReference>
<keyword id="KW-0010">Activator</keyword>
<keyword id="KW-0025">Alternative splicing</keyword>
<keyword id="KW-0963">Cytoplasm</keyword>
<keyword id="KW-0217">Developmental protein</keyword>
<keyword id="KW-0238">DNA-binding</keyword>
<keyword id="KW-0539">Nucleus</keyword>
<keyword id="KW-0597">Phosphoprotein</keyword>
<keyword id="KW-1185">Reference proteome</keyword>
<keyword id="KW-0727">SH2 domain</keyword>
<keyword id="KW-0804">Transcription</keyword>
<keyword id="KW-0805">Transcription regulation</keyword>
<reference evidence="5" key="1">
    <citation type="journal article" date="2006" name="Curr. Biol.">
        <title>C. elegans STAT cooperates with DAF-7/TGF-beta signaling to repress dauer formation.</title>
        <authorList>
            <person name="Wang Y."/>
            <person name="Levy D.E."/>
        </authorList>
    </citation>
    <scope>NUCLEOTIDE SEQUENCE [MRNA] (ISOFORM C)</scope>
    <scope>FUNCTION</scope>
    <scope>SUBCELLULAR LOCATION</scope>
    <scope>TISSUE SPECIFICITY</scope>
    <source>
        <strain>Bristol N2</strain>
    </source>
</reference>
<reference key="2">
    <citation type="journal article" date="1998" name="Science">
        <title>Genome sequence of the nematode C. elegans: a platform for investigating biology.</title>
        <authorList>
            <consortium name="The C. elegans sequencing consortium"/>
        </authorList>
    </citation>
    <scope>NUCLEOTIDE SEQUENCE [LARGE SCALE GENOMIC DNA]</scope>
    <scope>ALTERNATIVE SPLICING</scope>
    <source>
        <strain>Bristol N2</strain>
    </source>
</reference>
<evidence type="ECO:0000250" key="1">
    <source>
        <dbReference type="UniProtKB" id="P51692"/>
    </source>
</evidence>
<evidence type="ECO:0000255" key="2"/>
<evidence type="ECO:0000269" key="3">
    <source>
    </source>
</evidence>
<evidence type="ECO:0000303" key="4">
    <source>
    </source>
</evidence>
<evidence type="ECO:0000305" key="5"/>
<protein>
    <recommendedName>
        <fullName>Signal transducer and activator of transcription 1</fullName>
    </recommendedName>
</protein>